<feature type="signal peptide" evidence="2">
    <location>
        <begin position="1"/>
        <end position="22"/>
    </location>
</feature>
<feature type="propeptide" id="PRO_0000400819" evidence="1">
    <location>
        <begin position="23"/>
        <end position="48"/>
    </location>
</feature>
<feature type="peptide" id="PRO_0000400820" description="U4-theraphotoxin-Hhn1r">
    <location>
        <begin position="49"/>
        <end position="85"/>
    </location>
</feature>
<feature type="disulfide bond" evidence="1">
    <location>
        <begin position="52"/>
        <end position="66"/>
    </location>
</feature>
<feature type="disulfide bond" evidence="1">
    <location>
        <begin position="56"/>
        <end position="77"/>
    </location>
</feature>
<feature type="disulfide bond" evidence="1">
    <location>
        <begin position="71"/>
        <end position="82"/>
    </location>
</feature>
<protein>
    <recommendedName>
        <fullName>U4-theraphotoxin-Hhn1r</fullName>
        <shortName>U4-TRTX-Hhn1r</shortName>
    </recommendedName>
    <alternativeName>
        <fullName>Hainantoxin-II-26</fullName>
        <shortName>HNTX-II-26</shortName>
    </alternativeName>
</protein>
<evidence type="ECO:0000250" key="1"/>
<evidence type="ECO:0000255" key="2"/>
<evidence type="ECO:0000305" key="3"/>
<dbReference type="EMBL" id="GU293078">
    <property type="protein sequence ID" value="ADB56894.1"/>
    <property type="molecule type" value="Genomic_DNA"/>
</dbReference>
<dbReference type="SMR" id="D2Y2K1"/>
<dbReference type="ArachnoServer" id="AS001817">
    <property type="toxin name" value="U4-theraphotoxin-Hhn1r"/>
</dbReference>
<dbReference type="GO" id="GO:0005576">
    <property type="term" value="C:extracellular region"/>
    <property type="evidence" value="ECO:0007669"/>
    <property type="project" value="UniProtKB-SubCell"/>
</dbReference>
<dbReference type="GO" id="GO:0035792">
    <property type="term" value="C:host cell postsynaptic membrane"/>
    <property type="evidence" value="ECO:0007669"/>
    <property type="project" value="UniProtKB-KW"/>
</dbReference>
<dbReference type="GO" id="GO:0090729">
    <property type="term" value="F:toxin activity"/>
    <property type="evidence" value="ECO:0007669"/>
    <property type="project" value="UniProtKB-KW"/>
</dbReference>
<dbReference type="InterPro" id="IPR012625">
    <property type="entry name" value="Hwtx-2-like"/>
</dbReference>
<dbReference type="Pfam" id="PF08089">
    <property type="entry name" value="Toxin_20"/>
    <property type="match status" value="1"/>
</dbReference>
<dbReference type="SUPFAM" id="SSF57059">
    <property type="entry name" value="omega toxin-like"/>
    <property type="match status" value="1"/>
</dbReference>
<dbReference type="PROSITE" id="PS60022">
    <property type="entry name" value="HWTX_2"/>
    <property type="match status" value="1"/>
</dbReference>
<reference key="1">
    <citation type="journal article" date="2010" name="J. Proteome Res.">
        <title>Molecular diversification of peptide toxins from the tarantula Haplopelma hainanum (Ornithoctonus hainana) venom based on transcriptomic, peptidomic, and genomic analyses.</title>
        <authorList>
            <person name="Tang X."/>
            <person name="Zhang Y."/>
            <person name="Hu W."/>
            <person name="Xu D."/>
            <person name="Tao H."/>
            <person name="Yang X."/>
            <person name="Li Y."/>
            <person name="Jiang L."/>
            <person name="Liang S."/>
        </authorList>
    </citation>
    <scope>NUCLEOTIDE SEQUENCE [LARGE SCALE GENOMIC DNA]</scope>
    <source>
        <tissue>Venom gland</tissue>
    </source>
</reference>
<name>H2Z01_CYRHA</name>
<accession>D2Y2K1</accession>
<keyword id="KW-1015">Disulfide bond</keyword>
<keyword id="KW-0528">Neurotoxin</keyword>
<keyword id="KW-0629">Postsynaptic neurotoxin</keyword>
<keyword id="KW-0964">Secreted</keyword>
<keyword id="KW-0732">Signal</keyword>
<keyword id="KW-0800">Toxin</keyword>
<comment type="function">
    <text evidence="1">Postsynaptic neurotoxin.</text>
</comment>
<comment type="subcellular location">
    <subcellularLocation>
        <location evidence="1">Secreted</location>
    </subcellularLocation>
</comment>
<comment type="tissue specificity">
    <text>Expressed by the venom gland.</text>
</comment>
<comment type="similarity">
    <text evidence="3">Belongs to the neurotoxin 12 (Hwtx-2) family. 02 (Hwtx-2) subfamily.</text>
</comment>
<sequence>MKVTLIAILTCAAVLVLHTTAAEELEAESQLMEVGMPDTELAAVDEERLFKCSVSCEIEKEGNRDCKKKKCKGGWKCKFNMCVKV</sequence>
<organism>
    <name type="scientific">Cyriopagopus hainanus</name>
    <name type="common">Chinese bird spider</name>
    <name type="synonym">Haplopelma hainanum</name>
    <dbReference type="NCBI Taxonomy" id="209901"/>
    <lineage>
        <taxon>Eukaryota</taxon>
        <taxon>Metazoa</taxon>
        <taxon>Ecdysozoa</taxon>
        <taxon>Arthropoda</taxon>
        <taxon>Chelicerata</taxon>
        <taxon>Arachnida</taxon>
        <taxon>Araneae</taxon>
        <taxon>Mygalomorphae</taxon>
        <taxon>Theraphosidae</taxon>
        <taxon>Haplopelma</taxon>
    </lineage>
</organism>
<proteinExistence type="inferred from homology"/>